<protein>
    <recommendedName>
        <fullName>ATPase synthesis protein 25, mitochondrial</fullName>
    </recommendedName>
</protein>
<keyword id="KW-0472">Membrane</keyword>
<keyword id="KW-0496">Mitochondrion</keyword>
<keyword id="KW-0999">Mitochondrion inner membrane</keyword>
<keyword id="KW-1185">Reference proteome</keyword>
<keyword id="KW-0809">Transit peptide</keyword>
<organism>
    <name type="scientific">Lachancea thermotolerans (strain ATCC 56472 / CBS 6340 / NRRL Y-8284)</name>
    <name type="common">Yeast</name>
    <name type="synonym">Kluyveromyces thermotolerans</name>
    <dbReference type="NCBI Taxonomy" id="559295"/>
    <lineage>
        <taxon>Eukaryota</taxon>
        <taxon>Fungi</taxon>
        <taxon>Dikarya</taxon>
        <taxon>Ascomycota</taxon>
        <taxon>Saccharomycotina</taxon>
        <taxon>Saccharomycetes</taxon>
        <taxon>Saccharomycetales</taxon>
        <taxon>Saccharomycetaceae</taxon>
        <taxon>Lachancea</taxon>
    </lineage>
</organism>
<reference key="1">
    <citation type="journal article" date="2009" name="Genome Res.">
        <title>Comparative genomics of protoploid Saccharomycetaceae.</title>
        <authorList>
            <consortium name="The Genolevures Consortium"/>
            <person name="Souciet J.-L."/>
            <person name="Dujon B."/>
            <person name="Gaillardin C."/>
            <person name="Johnston M."/>
            <person name="Baret P.V."/>
            <person name="Cliften P."/>
            <person name="Sherman D.J."/>
            <person name="Weissenbach J."/>
            <person name="Westhof E."/>
            <person name="Wincker P."/>
            <person name="Jubin C."/>
            <person name="Poulain J."/>
            <person name="Barbe V."/>
            <person name="Segurens B."/>
            <person name="Artiguenave F."/>
            <person name="Anthouard V."/>
            <person name="Vacherie B."/>
            <person name="Val M.-E."/>
            <person name="Fulton R.S."/>
            <person name="Minx P."/>
            <person name="Wilson R."/>
            <person name="Durrens P."/>
            <person name="Jean G."/>
            <person name="Marck C."/>
            <person name="Martin T."/>
            <person name="Nikolski M."/>
            <person name="Rolland T."/>
            <person name="Seret M.-L."/>
            <person name="Casaregola S."/>
            <person name="Despons L."/>
            <person name="Fairhead C."/>
            <person name="Fischer G."/>
            <person name="Lafontaine I."/>
            <person name="Leh V."/>
            <person name="Lemaire M."/>
            <person name="de Montigny J."/>
            <person name="Neuveglise C."/>
            <person name="Thierry A."/>
            <person name="Blanc-Lenfle I."/>
            <person name="Bleykasten C."/>
            <person name="Diffels J."/>
            <person name="Fritsch E."/>
            <person name="Frangeul L."/>
            <person name="Goeffon A."/>
            <person name="Jauniaux N."/>
            <person name="Kachouri-Lafond R."/>
            <person name="Payen C."/>
            <person name="Potier S."/>
            <person name="Pribylova L."/>
            <person name="Ozanne C."/>
            <person name="Richard G.-F."/>
            <person name="Sacerdot C."/>
            <person name="Straub M.-L."/>
            <person name="Talla E."/>
        </authorList>
    </citation>
    <scope>NUCLEOTIDE SEQUENCE [LARGE SCALE GENOMIC DNA]</scope>
    <source>
        <strain>ATCC 56472 / CBS 6340 / NRRL Y-8284</strain>
    </source>
</reference>
<gene>
    <name type="primary">ATP25</name>
    <name type="ordered locus">KLTH0D05170g</name>
</gene>
<feature type="transit peptide" description="Mitochondrion" evidence="2">
    <location>
        <begin position="1"/>
        <end status="unknown"/>
    </location>
</feature>
<feature type="chain" id="PRO_0000404473" description="ATPase synthesis protein 25, mitochondrial">
    <location>
        <begin status="unknown"/>
        <end position="620"/>
    </location>
</feature>
<feature type="region of interest" description="Disordered" evidence="3">
    <location>
        <begin position="66"/>
        <end position="85"/>
    </location>
</feature>
<feature type="compositionally biased region" description="Basic and acidic residues" evidence="3">
    <location>
        <begin position="66"/>
        <end position="81"/>
    </location>
</feature>
<proteinExistence type="inferred from homology"/>
<dbReference type="EMBL" id="CU928168">
    <property type="protein sequence ID" value="CAR22508.1"/>
    <property type="molecule type" value="Genomic_DNA"/>
</dbReference>
<dbReference type="RefSeq" id="XP_002552946.1">
    <property type="nucleotide sequence ID" value="XM_002552900.1"/>
</dbReference>
<dbReference type="SMR" id="C5DGG6"/>
<dbReference type="FunCoup" id="C5DGG6">
    <property type="interactions" value="93"/>
</dbReference>
<dbReference type="STRING" id="559295.C5DGG6"/>
<dbReference type="GeneID" id="8295174"/>
<dbReference type="KEGG" id="lth:KLTH0D05170g"/>
<dbReference type="eggNOG" id="ENOG502RGZN">
    <property type="taxonomic scope" value="Eukaryota"/>
</dbReference>
<dbReference type="HOGENOM" id="CLU_487522_0_0_1"/>
<dbReference type="InParanoid" id="C5DGG6"/>
<dbReference type="OMA" id="SWYMIDC"/>
<dbReference type="OrthoDB" id="107372at2759"/>
<dbReference type="Proteomes" id="UP000002036">
    <property type="component" value="Chromosome D"/>
</dbReference>
<dbReference type="GO" id="GO:0005743">
    <property type="term" value="C:mitochondrial inner membrane"/>
    <property type="evidence" value="ECO:0007669"/>
    <property type="project" value="UniProtKB-SubCell"/>
</dbReference>
<dbReference type="GO" id="GO:0140053">
    <property type="term" value="P:mitochondrial gene expression"/>
    <property type="evidence" value="ECO:0007669"/>
    <property type="project" value="InterPro"/>
</dbReference>
<dbReference type="GO" id="GO:0048255">
    <property type="term" value="P:mRNA stabilization"/>
    <property type="evidence" value="ECO:0007669"/>
    <property type="project" value="InterPro"/>
</dbReference>
<dbReference type="Gene3D" id="3.30.460.10">
    <property type="entry name" value="Beta Polymerase, domain 2"/>
    <property type="match status" value="1"/>
</dbReference>
<dbReference type="InterPro" id="IPR040152">
    <property type="entry name" value="Atp25"/>
</dbReference>
<dbReference type="InterPro" id="IPR025210">
    <property type="entry name" value="ATP25_mRNA_stabil_dom"/>
</dbReference>
<dbReference type="InterPro" id="IPR043519">
    <property type="entry name" value="NT_sf"/>
</dbReference>
<dbReference type="PANTHER" id="PTHR28087">
    <property type="entry name" value="ATPASE SYNTHESIS PROTEIN 25, MITOCHONDRIAL"/>
    <property type="match status" value="1"/>
</dbReference>
<dbReference type="PANTHER" id="PTHR28087:SF1">
    <property type="entry name" value="ATPASE SYNTHESIS PROTEIN 25, MITOCHONDRIAL"/>
    <property type="match status" value="1"/>
</dbReference>
<dbReference type="Pfam" id="PF13929">
    <property type="entry name" value="mRNA_stabil"/>
    <property type="match status" value="1"/>
</dbReference>
<dbReference type="Pfam" id="PF02410">
    <property type="entry name" value="RsfS"/>
    <property type="match status" value="1"/>
</dbReference>
<dbReference type="SUPFAM" id="SSF81301">
    <property type="entry name" value="Nucleotidyltransferase"/>
    <property type="match status" value="1"/>
</dbReference>
<evidence type="ECO:0000250" key="1"/>
<evidence type="ECO:0000255" key="2"/>
<evidence type="ECO:0000256" key="3">
    <source>
        <dbReference type="SAM" id="MobiDB-lite"/>
    </source>
</evidence>
<evidence type="ECO:0000305" key="4"/>
<comment type="function">
    <text evidence="1">Probable mitochondrial mRNA stabilization factor.</text>
</comment>
<comment type="subcellular location">
    <subcellularLocation>
        <location evidence="1">Mitochondrion inner membrane</location>
        <topology evidence="1">Peripheral membrane protein</topology>
        <orientation evidence="1">Matrix side</orientation>
    </subcellularLocation>
</comment>
<comment type="similarity">
    <text evidence="4">Belongs to the ATP25 family.</text>
</comment>
<name>ATP25_LACTC</name>
<accession>C5DGG6</accession>
<sequence>MIERLILFNFQSDKNTKHTRVRNMLLRRAAAALPARKTPLHCYRRLGGSYRALSGSLLLRDEEKRLPHRVQDERDEAKADTDLAADGDSAATKPWYLNIVERPAQNMPLHQQEIVFPANSPKSLETIATFLRDKLGLSDVLIFDLRDSQDEQVTAASKISDFMVMATAKSGRHGHKSFIELNTLLKQEFKTVGQVEGNISANELRRRQKRLARHTNLSKSMGSRTATTRSGSNLESWYMIDCRLDNIFVNILTENKRQDLNLEELYAPPDQKHLYRREAPAEDVAPKEGDDNVLAGLKRLAARNQRRYFTTVPARVQIIDALSRQDFDLVLNVVSASKMDSLDILKAANQTLRSMPYGVKIEGESWITFLDEVWPLAPYSQDFWSTRLELFKLLNCAAPGQVNVDRVFTGYLKFKLASGESLTKSDLVEFLQLVETNLSENSHVDYEDLVAKNKCVLEALKLYKGLDPRLILDSEVMCLLLSTLSITQSGSTSTLRAFYEMVEFASREFSQEPPVPVTATVLRILADKQDYARILRFWEKSIASSPEKDHRPWPLFLDTVASTGDQEFAKKVIRDGHLLWIKRNGVKASPELREAIERLFAVADPAEVAFKDVKEFLTVE</sequence>